<evidence type="ECO:0000255" key="1">
    <source>
        <dbReference type="HAMAP-Rule" id="MF_00860"/>
    </source>
</evidence>
<evidence type="ECO:0000269" key="2">
    <source>
    </source>
</evidence>
<evidence type="ECO:0000305" key="3"/>
<evidence type="ECO:0000305" key="4">
    <source>
    </source>
</evidence>
<evidence type="ECO:0000305" key="5">
    <source>
    </source>
</evidence>
<protein>
    <recommendedName>
        <fullName evidence="1">Ribulose bisphosphate carboxylase small subunit, chloroplastic</fullName>
        <shortName evidence="1">RuBisCO small subunit</shortName>
    </recommendedName>
    <component>
        <recommendedName>
            <fullName>Ribulose bisphosphate carboxylase small chain P1, chloroplastic</fullName>
        </recommendedName>
    </component>
    <component>
        <recommendedName>
            <fullName>Ribulose bisphosphate carboxylase small chain P2, chloroplastic</fullName>
        </recommendedName>
    </component>
    <component>
        <recommendedName>
            <fullName>Ribulose bisphosphate carboxylase small chain P3, chloroplastic</fullName>
        </recommendedName>
    </component>
    <component>
        <recommendedName>
            <fullName>Ribulose bisphosphate carboxylase small chain P4, chloroplastic</fullName>
        </recommendedName>
    </component>
    <component>
        <recommendedName>
            <fullName>Ribulose bisphosphate carboxylase small chain P5, chloroplastic</fullName>
        </recommendedName>
    </component>
    <component>
        <recommendedName>
            <fullName>Ribulose bisphosphate carboxylase small chain P6, chloroplastic</fullName>
        </recommendedName>
    </component>
    <component>
        <recommendedName>
            <fullName>Ribulose bisphosphate carboxylase small chain P7, chloroplastic</fullName>
        </recommendedName>
    </component>
    <component>
        <recommendedName>
            <fullName>Ribulose bisphosphate carboxylase small chain P8, chloroplastic</fullName>
        </recommendedName>
    </component>
</protein>
<feature type="transit peptide" description="Chloroplast" evidence="2">
    <location>
        <begin position="1"/>
        <end position="134"/>
    </location>
</feature>
<feature type="chain" id="PRO_0000031476" description="Ribulose bisphosphate carboxylase small chain P1, chloroplastic">
    <location>
        <begin position="135"/>
        <end position="268"/>
    </location>
</feature>
<feature type="propeptide" id="PRO_0000031477">
    <location>
        <begin position="269"/>
        <end position="278"/>
    </location>
</feature>
<feature type="chain" id="PRO_0000031478" description="Ribulose bisphosphate carboxylase small chain P2, chloroplastic">
    <location>
        <begin position="279"/>
        <end position="411"/>
    </location>
</feature>
<feature type="propeptide" id="PRO_0000031479">
    <location>
        <begin position="412"/>
        <end position="421"/>
    </location>
</feature>
<feature type="chain" id="PRO_0000031480" description="Ribulose bisphosphate carboxylase small chain P3, chloroplastic">
    <location>
        <begin position="422"/>
        <end position="555"/>
    </location>
</feature>
<feature type="propeptide" id="PRO_0000031481">
    <location>
        <begin position="556"/>
        <end position="565"/>
    </location>
</feature>
<feature type="chain" id="PRO_0000031482" description="Ribulose bisphosphate carboxylase small chain P4, chloroplastic">
    <location>
        <begin position="566"/>
        <end position="698"/>
    </location>
</feature>
<feature type="propeptide" id="PRO_0000031483">
    <location>
        <begin position="699"/>
        <end position="708"/>
    </location>
</feature>
<feature type="chain" id="PRO_0000031484" description="Ribulose bisphosphate carboxylase small chain P5, chloroplastic">
    <location>
        <begin position="709"/>
        <end position="843"/>
    </location>
</feature>
<feature type="propeptide" id="PRO_0000031485">
    <location>
        <begin position="844"/>
        <end position="853"/>
    </location>
</feature>
<feature type="chain" id="PRO_0000031486" description="Ribulose bisphosphate carboxylase small chain P6, chloroplastic">
    <location>
        <begin position="854"/>
        <end position="986"/>
    </location>
</feature>
<feature type="propeptide" id="PRO_0000031487">
    <location>
        <begin position="987"/>
        <end position="996"/>
    </location>
</feature>
<feature type="chain" id="PRO_0000031488" description="Ribulose bisphosphate carboxylase small chain P7, chloroplastic">
    <location>
        <begin position="997"/>
        <end position="1130"/>
    </location>
</feature>
<feature type="propeptide" id="PRO_0000031489">
    <location>
        <begin position="1131"/>
        <end position="1140"/>
    </location>
</feature>
<feature type="chain" id="PRO_0000031490" description="Ribulose bisphosphate carboxylase small chain P8, chloroplastic">
    <location>
        <begin position="1141"/>
        <end position="1273"/>
    </location>
</feature>
<feature type="sequence conflict" description="In Ref. 2; CAA55779." evidence="3" ref="2">
    <original>S</original>
    <variation>SS</variation>
    <location>
        <position position="410"/>
    </location>
</feature>
<feature type="sequence conflict" description="In Ref. 2; CAA55779." evidence="3" ref="2">
    <original>H</original>
    <variation>R</variation>
    <location>
        <position position="492"/>
    </location>
</feature>
<feature type="sequence conflict" description="In Ref. 2; CAA55779." evidence="3" ref="2">
    <original>D</original>
    <variation>E</variation>
    <location>
        <position position="565"/>
    </location>
</feature>
<feature type="sequence conflict" description="In Ref. 2; CAA55779." evidence="3" ref="2">
    <original>S</original>
    <variation>SS</variation>
    <location>
        <position position="697"/>
    </location>
</feature>
<feature type="sequence conflict" description="In Ref. 2; CAA55779." evidence="3" ref="2">
    <location>
        <position position="842"/>
    </location>
</feature>
<feature type="sequence conflict" description="In Ref. 2; CAA55779." evidence="3" ref="2">
    <original>A</original>
    <variation>AA</variation>
    <location>
        <position position="961"/>
    </location>
</feature>
<feature type="sequence conflict" description="In Ref. 2; CAA55779." evidence="3" ref="2">
    <original>D</original>
    <variation>E</variation>
    <location>
        <position position="996"/>
    </location>
</feature>
<feature type="sequence conflict" description="In Ref. 2; CAA55779." evidence="3" ref="2">
    <original>E</original>
    <variation>D</variation>
    <location>
        <position position="1140"/>
    </location>
</feature>
<name>RBS_EUGGR</name>
<accession>P16881</accession>
<accession>Q42727</accession>
<gene>
    <name evidence="1" type="primary">RBCS</name>
    <name type="synonym">RBCS1</name>
</gene>
<comment type="function">
    <text evidence="1">RuBisCO catalyzes two reactions: the carboxylation of D-ribulose 1,5-bisphosphate, the primary event in carbon dioxide fixation, as well as the oxidative fragmentation of the pentose substrate. Both reactions occur simultaneously and in competition at the same active site. Although the small subunit is not catalytic it is essential for maximal activity.</text>
</comment>
<comment type="subunit">
    <text evidence="1">Heterohexadecamer of 8 large and 8 small subunits.</text>
</comment>
<comment type="subcellular location">
    <subcellularLocation>
        <location evidence="1 4 5">Plastid</location>
        <location evidence="1 4 5">Chloroplast</location>
    </subcellularLocation>
    <text evidence="4">In this organism the chloroplast is within a membrane system that is probably derived from the endoplasmic reticulum. The first half of the transit peptide resembles a signal sequence while the second half has the hallmarks of a transit peptide.</text>
</comment>
<comment type="PTM">
    <text evidence="2 4 5">Eight small subunits are processed from a large polyprotein (Probable). All start with the same sequence but there is more heterogeneity at the C-terminus (PubMed:24302307).</text>
</comment>
<comment type="miscellaneous">
    <text evidence="1">The basic functional RuBisCO is composed of a large chain homodimer in a 'head-to-tail' conformation. In form I RuBisCO this homodimer is arranged in a barrel-like tetramer with the small subunits forming a tetrameric 'cap' on each end of the 'barrel'.</text>
</comment>
<comment type="similarity">
    <text evidence="1">Belongs to the RuBisCO small chain family.</text>
</comment>
<proteinExistence type="evidence at protein level"/>
<keyword id="KW-0113">Calvin cycle</keyword>
<keyword id="KW-0120">Carbon dioxide fixation</keyword>
<keyword id="KW-0150">Chloroplast</keyword>
<keyword id="KW-0903">Direct protein sequencing</keyword>
<keyword id="KW-0601">Photorespiration</keyword>
<keyword id="KW-0602">Photosynthesis</keyword>
<keyword id="KW-0934">Plastid</keyword>
<keyword id="KW-0677">Repeat</keyword>
<keyword id="KW-0809">Transit peptide</keyword>
<organism>
    <name type="scientific">Euglena gracilis</name>
    <dbReference type="NCBI Taxonomy" id="3039"/>
    <lineage>
        <taxon>Eukaryota</taxon>
        <taxon>Discoba</taxon>
        <taxon>Euglenozoa</taxon>
        <taxon>Euglenida</taxon>
        <taxon>Spirocuta</taxon>
        <taxon>Euglenophyceae</taxon>
        <taxon>Euglenales</taxon>
        <taxon>Euglenaceae</taxon>
        <taxon>Euglena</taxon>
    </lineage>
</organism>
<reference key="1">
    <citation type="journal article" date="1990" name="EMBO J.">
        <title>Eight small subunits of Euglena ribulose 1-5 bisphosphate carboxylase/oxygenase are translated from a large mRNA as a polyprotein.</title>
        <authorList>
            <person name="Chan R.L."/>
            <person name="Keller M."/>
            <person name="Canaday J."/>
            <person name="Weil J.H."/>
            <person name="Imbault P."/>
        </authorList>
    </citation>
    <scope>NUCLEOTIDE SEQUENCE [MRNA]</scope>
    <scope>PROBABLE POLYPROTEIN PROCESSING</scope>
    <source>
        <strain>Z / UTEX 753</strain>
    </source>
</reference>
<reference key="2">
    <citation type="journal article" date="1995" name="J. Mol. Biol.">
        <title>Structure and expression of Euglena gracilis nuclear rbcS genes encoding the small subunits of the ribulose 1,5-bisphosphate carboxylase/oxygenase: a novel splicing process for unusual intervening sequences?</title>
        <authorList>
            <person name="Tessier L.H."/>
            <person name="Paulus F."/>
            <person name="Keller M."/>
            <person name="Vial C."/>
            <person name="Imbault P."/>
        </authorList>
    </citation>
    <scope>NUCLEOTIDE SEQUENCE [GENOMIC DNA]</scope>
    <source>
        <strain>Z / UTEX 753</strain>
    </source>
</reference>
<reference key="3">
    <citation type="journal article" date="1986" name="Plant Mol. Biol.">
        <title>Amino acid sequence of the ribulose-1,5-bisphosphate carboxylase/oxygenase small subunit from Euglena.</title>
        <authorList>
            <person name="Sailland A."/>
            <person name="Amiri I."/>
            <person name="Freyssinet G."/>
        </authorList>
    </citation>
    <scope>PROTEIN SEQUENCE OF 135-138; 266-268; 279-282; 409-411; 422-425; 553-555; 566-569; 696-698; 709-712; 841-843; 854-857; 984-986; 997-1000; 1128-1130 AND 1141-1144</scope>
    <scope>PROBABLE POLYPROTEIN PROCESSING</scope>
</reference>
<dbReference type="EMBL" id="X17546">
    <property type="protein sequence ID" value="CAA35584.1"/>
    <property type="molecule type" value="mRNA"/>
</dbReference>
<dbReference type="EMBL" id="X79152">
    <property type="protein sequence ID" value="CAA55779.1"/>
    <property type="molecule type" value="Genomic_DNA"/>
</dbReference>
<dbReference type="PIR" id="S53636">
    <property type="entry name" value="S53636"/>
</dbReference>
<dbReference type="SMR" id="P16881"/>
<dbReference type="SABIO-RK" id="P16881"/>
<dbReference type="GO" id="GO:0009507">
    <property type="term" value="C:chloroplast"/>
    <property type="evidence" value="ECO:0007669"/>
    <property type="project" value="UniProtKB-SubCell"/>
</dbReference>
<dbReference type="GO" id="GO:0016984">
    <property type="term" value="F:ribulose-bisphosphate carboxylase activity"/>
    <property type="evidence" value="ECO:0007669"/>
    <property type="project" value="UniProtKB-UniRule"/>
</dbReference>
<dbReference type="GO" id="GO:0009853">
    <property type="term" value="P:photorespiration"/>
    <property type="evidence" value="ECO:0007669"/>
    <property type="project" value="UniProtKB-KW"/>
</dbReference>
<dbReference type="GO" id="GO:0019253">
    <property type="term" value="P:reductive pentose-phosphate cycle"/>
    <property type="evidence" value="ECO:0007669"/>
    <property type="project" value="UniProtKB-UniRule"/>
</dbReference>
<dbReference type="CDD" id="cd03527">
    <property type="entry name" value="RuBisCO_small"/>
    <property type="match status" value="8"/>
</dbReference>
<dbReference type="FunFam" id="3.30.190.10:FF:000001">
    <property type="entry name" value="Ribulose bisphosphate carboxylase small chain, chloroplastic"/>
    <property type="match status" value="7"/>
</dbReference>
<dbReference type="Gene3D" id="3.30.190.10">
    <property type="entry name" value="Ribulose bisphosphate carboxylase, small subunit"/>
    <property type="match status" value="8"/>
</dbReference>
<dbReference type="HAMAP" id="MF_00859">
    <property type="entry name" value="RuBisCO_S_bact"/>
    <property type="match status" value="1"/>
</dbReference>
<dbReference type="InterPro" id="IPR024681">
    <property type="entry name" value="RuBisCO_ssu"/>
</dbReference>
<dbReference type="InterPro" id="IPR000894">
    <property type="entry name" value="RuBisCO_ssu_dom"/>
</dbReference>
<dbReference type="InterPro" id="IPR036385">
    <property type="entry name" value="RuBisCO_ssu_sf"/>
</dbReference>
<dbReference type="PANTHER" id="PTHR31262">
    <property type="entry name" value="RIBULOSE BISPHOSPHATE CARBOXYLASE SMALL CHAIN 1, CHLOROPLASTIC"/>
    <property type="match status" value="1"/>
</dbReference>
<dbReference type="Pfam" id="PF00101">
    <property type="entry name" value="RuBisCO_small"/>
    <property type="match status" value="8"/>
</dbReference>
<dbReference type="PRINTS" id="PR00152">
    <property type="entry name" value="RUBISCOSMALL"/>
</dbReference>
<dbReference type="SMART" id="SM00961">
    <property type="entry name" value="RuBisCO_small"/>
    <property type="match status" value="8"/>
</dbReference>
<dbReference type="SUPFAM" id="SSF55239">
    <property type="entry name" value="RuBisCO, small subunit"/>
    <property type="match status" value="8"/>
</dbReference>
<sequence>MPFDRQPLLSGEKGMPATSLWLVGGAVIAAVCVIVNTSYNGTQLSVTARPIQAAVSQVSMARFAESGVSRGSGNRVSQAVPLMAASVGAESESRRWVASAILFPLSGLFAAVALKMAMMKPKVAAVLPFTSEKDMKVWNPVNNKKFETFSYLPPLSDAQIAKQVDMIIAKGLSPCLEFAAPENSFIANDNTVRFSGTAAGYYDNRYWTMWKLPMFGCTDASQVLREISECRRAYPQCYVRLAAFDSVKQVQVISFVVQRPSGSSSSSWGMAAMTGEKDMKVWNPVNNKKFETFSYLPPLSDAQIAKQVDMIIAKGLSPCLEFAAPENSFIANDNTVRFSGTAAGYYDNRYWTMWKLPMFGCTDASQVLREISECRRAYPQCYVRLAAFDSVKQVQVISFVVQRPSGSSSSWGMAAMTGEKDMKVWNPVNNKKFETFSYLPPLSDAQIAKQVDMIIAKGLSPCLEFAAPENSFIANDNTVRFSGTAAGYYDNHYWTMWKLPMFGCTDASQVLREISECRRAYPQCYVRLAAFDSVKQVQVISFVVQRPSGSSSSSWGMAAMTGEKDMKVWNPVNNKKFETFSYLPPLSDAQIAKQVDMIIAKGLSPCLEFAAPENSFIANDNTVRFSGTAAGYYDNRYWTMWKLPMFGCTDASQVLREISECRRAYPQCYVRLAAFDSVKQVQVISFVVQRPSGSSSSWGMAAMTGEKDMKVWNPVNNKKFETFSYLPPLSDAQIAKQVDMIIAKGLSPCLEFAAPENSFIANDNTVRFSGTAAGYYDNRYWTMWKLPMFGCTDASQVLREISECRRAYPQCYVRLAAFDSVKQVQVISFVVQRPSGSSSSSSWGMAAMTGEKEMKVWNPVNNKKFETFSYLPPLSDAQIAKQVDMIIAKGLSPCLEFAAPENSFIANDNTVRFSGTAAGYYDNRYWTMWKLPMFGCTDASQVLREISECRRAYPQCYVRLAFDSVKQVQVISFVVQRPSGSSSSSWGMAAMTGEKDMKVWNPVNNKKFETFSYLPPLSDAQIAKQVDMIIAKGLSPCLEFAAPENSFIANDNTVRFSGTAAGYYDNRYWTMWKLPMFGCTDASQVLREISECRRAYPQCYVRLAAFDSVKQVQVISFVVQRPSGSSSSSWGMAAMTGEKEMKVWNPVNNKKFETFSYLPPLSDAQIAKQVDMIIAKGLSPCLEFAAPENSFIANDNTVRFSGTAAGYYDNRYWTMWKLPMFGCTDASQVLREISECRRAYPQCYVRLAAFDSVKQVQVISFVVQRPSSGGRSW</sequence>